<proteinExistence type="evidence at protein level"/>
<dbReference type="EC" id="3.1.1.-" evidence="6"/>
<dbReference type="EMBL" id="AAYY01000004">
    <property type="protein sequence ID" value="EDP43934.1"/>
    <property type="molecule type" value="Genomic_DNA"/>
</dbReference>
<dbReference type="RefSeq" id="XP_001731148.1">
    <property type="nucleotide sequence ID" value="XM_001731096.1"/>
</dbReference>
<dbReference type="SMR" id="A8PX55"/>
<dbReference type="GeneID" id="5855455"/>
<dbReference type="KEGG" id="mgl:MGL_1331"/>
<dbReference type="VEuPathDB" id="FungiDB:MGL_1331"/>
<dbReference type="InParanoid" id="A8PX55"/>
<dbReference type="OMA" id="QIWINPS"/>
<dbReference type="OrthoDB" id="426718at2759"/>
<dbReference type="Proteomes" id="UP000008837">
    <property type="component" value="Unassembled WGS sequence"/>
</dbReference>
<dbReference type="GO" id="GO:0005576">
    <property type="term" value="C:extracellular region"/>
    <property type="evidence" value="ECO:0007669"/>
    <property type="project" value="UniProtKB-SubCell"/>
</dbReference>
<dbReference type="GO" id="GO:0016787">
    <property type="term" value="F:hydrolase activity"/>
    <property type="evidence" value="ECO:0007669"/>
    <property type="project" value="UniProtKB-KW"/>
</dbReference>
<dbReference type="GO" id="GO:0016042">
    <property type="term" value="P:lipid catabolic process"/>
    <property type="evidence" value="ECO:0007669"/>
    <property type="project" value="UniProtKB-KW"/>
</dbReference>
<dbReference type="CDD" id="cd00741">
    <property type="entry name" value="Lipase"/>
    <property type="match status" value="1"/>
</dbReference>
<dbReference type="Gene3D" id="3.40.50.1820">
    <property type="entry name" value="alpha/beta hydrolase"/>
    <property type="match status" value="1"/>
</dbReference>
<dbReference type="InterPro" id="IPR029058">
    <property type="entry name" value="AB_hydrolase_fold"/>
</dbReference>
<dbReference type="InterPro" id="IPR002921">
    <property type="entry name" value="Fungal_lipase-type"/>
</dbReference>
<dbReference type="InterPro" id="IPR051218">
    <property type="entry name" value="Sec_MonoDiacylglyc_Lipase"/>
</dbReference>
<dbReference type="PANTHER" id="PTHR45856">
    <property type="entry name" value="ALPHA/BETA-HYDROLASES SUPERFAMILY PROTEIN"/>
    <property type="match status" value="1"/>
</dbReference>
<dbReference type="PANTHER" id="PTHR45856:SF25">
    <property type="entry name" value="FUNGAL LIPASE-LIKE DOMAIN-CONTAINING PROTEIN"/>
    <property type="match status" value="1"/>
</dbReference>
<dbReference type="Pfam" id="PF01764">
    <property type="entry name" value="Lipase_3"/>
    <property type="match status" value="1"/>
</dbReference>
<dbReference type="SUPFAM" id="SSF53474">
    <property type="entry name" value="alpha/beta-Hydrolases"/>
    <property type="match status" value="1"/>
</dbReference>
<protein>
    <recommendedName>
        <fullName evidence="7">Secreted mono- and diacylglycerol lipase MDL5</fullName>
        <ecNumber evidence="6">3.1.1.-</ecNumber>
    </recommendedName>
</protein>
<reference key="1">
    <citation type="journal article" date="2007" name="Proc. Natl. Acad. Sci. U.S.A.">
        <title>Dandruff-associated Malassezia genomes reveal convergent and divergent virulence traits shared with plant and human fungal pathogens.</title>
        <authorList>
            <person name="Xu J."/>
            <person name="Saunders C.W."/>
            <person name="Hu P."/>
            <person name="Grant R.A."/>
            <person name="Boekhout T."/>
            <person name="Kuramae E.E."/>
            <person name="Kronstad J.W."/>
            <person name="DeAngelis Y.M."/>
            <person name="Reeder N.L."/>
            <person name="Johnstone K.R."/>
            <person name="Leland M."/>
            <person name="Fieno A.M."/>
            <person name="Begley W.M."/>
            <person name="Sun Y."/>
            <person name="Lacey M.P."/>
            <person name="Chaudhary T."/>
            <person name="Keough T."/>
            <person name="Chu L."/>
            <person name="Sears R."/>
            <person name="Yuan B."/>
            <person name="Dawson T.L. Jr."/>
        </authorList>
    </citation>
    <scope>NUCLEOTIDE SEQUENCE [LARGE SCALE GENOMIC DNA]</scope>
    <scope>IDENTIFICATION</scope>
    <scope>FUNCTION</scope>
    <scope>SUBCELLULAR LOCATION</scope>
    <source>
        <strain>ATCC MYA-4612 / CBS 7966</strain>
    </source>
</reference>
<reference key="2">
    <citation type="journal article" date="2016" name="Microbiology">
        <title>Secreted lipases from Malassezia globosa: recombinant expression and determination of their substrate specificities.</title>
        <authorList>
            <person name="Sommer B."/>
            <person name="Overy D.P."/>
            <person name="Haltli B."/>
            <person name="Kerr R.G."/>
        </authorList>
    </citation>
    <scope>FUNCTION</scope>
    <scope>CATALYTIC ACTIVITY</scope>
    <scope>SUBSTRATE SPECIFICITY</scope>
</reference>
<gene>
    <name evidence="7" type="primary">MDL5</name>
    <name type="ORF">MGL_1331</name>
</gene>
<feature type="signal peptide" evidence="2">
    <location>
        <begin position="1"/>
        <end position="20"/>
    </location>
</feature>
<feature type="chain" id="PRO_5002725380" description="Secreted mono- and diacylglycerol lipase MDL5">
    <location>
        <begin position="21"/>
        <end position="313"/>
    </location>
</feature>
<feature type="active site" description="Nucleophile" evidence="1 4">
    <location>
        <position position="180"/>
    </location>
</feature>
<feature type="active site" evidence="1">
    <location>
        <position position="238"/>
    </location>
</feature>
<feature type="active site" evidence="1">
    <location>
        <position position="290"/>
    </location>
</feature>
<feature type="glycosylation site" description="N-linked (GlcNAc...) asparagine" evidence="3">
    <location>
        <position position="72"/>
    </location>
</feature>
<feature type="glycosylation site" description="N-linked (GlcNAc...) asparagine" evidence="3">
    <location>
        <position position="111"/>
    </location>
</feature>
<feature type="glycosylation site" description="N-linked (GlcNAc...) asparagine" evidence="3">
    <location>
        <position position="263"/>
    </location>
</feature>
<feature type="disulfide bond" evidence="1">
    <location>
        <begin position="66"/>
        <end position="306"/>
    </location>
</feature>
<organism>
    <name type="scientific">Malassezia globosa (strain ATCC MYA-4612 / CBS 7966)</name>
    <name type="common">Dandruff-associated fungus</name>
    <dbReference type="NCBI Taxonomy" id="425265"/>
    <lineage>
        <taxon>Eukaryota</taxon>
        <taxon>Fungi</taxon>
        <taxon>Dikarya</taxon>
        <taxon>Basidiomycota</taxon>
        <taxon>Ustilaginomycotina</taxon>
        <taxon>Malasseziomycetes</taxon>
        <taxon>Malasseziales</taxon>
        <taxon>Malasseziaceae</taxon>
        <taxon>Malassezia</taxon>
    </lineage>
</organism>
<keyword id="KW-0134">Cell wall</keyword>
<keyword id="KW-1015">Disulfide bond</keyword>
<keyword id="KW-0325">Glycoprotein</keyword>
<keyword id="KW-0378">Hydrolase</keyword>
<keyword id="KW-0442">Lipid degradation</keyword>
<keyword id="KW-0443">Lipid metabolism</keyword>
<keyword id="KW-1185">Reference proteome</keyword>
<keyword id="KW-0964">Secreted</keyword>
<keyword id="KW-0732">Signal</keyword>
<keyword id="KW-0843">Virulence</keyword>
<comment type="function">
    <text evidence="5 6">Secreted lipase involved in Dandruff and seborrheic dermatitis (D/SD) probably via lipase-mediated breakdown of sebaceous lipids and release of irritating free fatty acids (PubMed:18000048). Shows activity against monoglyceride and diglyceride substrates, but not triglyceride substrates and does not exhibit regio-selective production of diacylglycerols (PubMed:27130210). Cleaves oleic acid from 1,2 isomers of diolein on both the 1 and the 2 position of the glycerol backbone, resulting mainly in free fatty acids but no monoolein is detected (PubMed:27130210). Shows activity on monoolein and liberates mostly free fatty acids, but can also perform the reverse reaction and produce diolein (PubMed:27130210).</text>
</comment>
<comment type="catalytic activity">
    <reaction evidence="6">
        <text>a monoacylglycerol + H2O = glycerol + a fatty acid + H(+)</text>
        <dbReference type="Rhea" id="RHEA:15245"/>
        <dbReference type="ChEBI" id="CHEBI:15377"/>
        <dbReference type="ChEBI" id="CHEBI:15378"/>
        <dbReference type="ChEBI" id="CHEBI:17408"/>
        <dbReference type="ChEBI" id="CHEBI:17754"/>
        <dbReference type="ChEBI" id="CHEBI:28868"/>
    </reaction>
</comment>
<comment type="catalytic activity">
    <reaction evidence="6">
        <text>a diacylglycerol + H2O = a monoacylglycerol + a fatty acid + H(+)</text>
        <dbReference type="Rhea" id="RHEA:32731"/>
        <dbReference type="ChEBI" id="CHEBI:15377"/>
        <dbReference type="ChEBI" id="CHEBI:15378"/>
        <dbReference type="ChEBI" id="CHEBI:17408"/>
        <dbReference type="ChEBI" id="CHEBI:18035"/>
        <dbReference type="ChEBI" id="CHEBI:28868"/>
    </reaction>
</comment>
<comment type="subcellular location">
    <subcellularLocation>
        <location evidence="5">Secreted</location>
    </subcellularLocation>
    <subcellularLocation>
        <location evidence="5">Secreted</location>
        <location evidence="5">Cell wall</location>
    </subcellularLocation>
</comment>
<comment type="similarity">
    <text evidence="8">Belongs to the AB hydrolase superfamily. Lipase family. Class 3 subfamily.</text>
</comment>
<sequence length="313" mass="35410">MQLQYVLTLLWIIFAQNVFSRPTISKVAPENIEFFGRVTSYQKPVKVPDPISMYQQFAGLAQQSNCFKTKINATIGDAQLLFSWGDDDKNQRMQIFRSKSLGIVTSWSGMNVTSLTSLLSAADLFLVDVDRKYFPRVKKGSKLYDGFQNAFKRAAPVLVKKIQYFQELYDEDRVSLTGLSFGAALADIALPYVKENLKRGHIHRVVVFGHPRIGNQEWADSLDTYAEGKFFYVVNGNDIVPHLPPREFGYQQPSGQIWINPSNSSNWKLYPGQENVHGANSIFGFSIKDHTGVYFRTEIGSFWGHCPATIGQD</sequence>
<accession>A8PX55</accession>
<name>MDL5_MALGO</name>
<evidence type="ECO:0000250" key="1">
    <source>
        <dbReference type="UniProtKB" id="A8PUY1"/>
    </source>
</evidence>
<evidence type="ECO:0000255" key="2"/>
<evidence type="ECO:0000255" key="3">
    <source>
        <dbReference type="PROSITE-ProRule" id="PRU00498"/>
    </source>
</evidence>
<evidence type="ECO:0000255" key="4">
    <source>
        <dbReference type="PROSITE-ProRule" id="PRU10037"/>
    </source>
</evidence>
<evidence type="ECO:0000269" key="5">
    <source>
    </source>
</evidence>
<evidence type="ECO:0000269" key="6">
    <source>
    </source>
</evidence>
<evidence type="ECO:0000303" key="7">
    <source>
    </source>
</evidence>
<evidence type="ECO:0000305" key="8"/>